<keyword id="KW-0067">ATP-binding</keyword>
<keyword id="KW-1003">Cell membrane</keyword>
<keyword id="KW-0472">Membrane</keyword>
<keyword id="KW-0547">Nucleotide-binding</keyword>
<keyword id="KW-0592">Phosphate transport</keyword>
<keyword id="KW-1278">Translocase</keyword>
<keyword id="KW-0813">Transport</keyword>
<accession>Q6GH21</accession>
<evidence type="ECO:0000255" key="1">
    <source>
        <dbReference type="HAMAP-Rule" id="MF_01702"/>
    </source>
</evidence>
<evidence type="ECO:0000256" key="2">
    <source>
        <dbReference type="SAM" id="MobiDB-lite"/>
    </source>
</evidence>
<protein>
    <recommendedName>
        <fullName evidence="1">Phosphate import ATP-binding protein PstB</fullName>
        <ecNumber evidence="1">7.3.2.1</ecNumber>
    </recommendedName>
    <alternativeName>
        <fullName evidence="1">ABC phosphate transporter</fullName>
    </alternativeName>
    <alternativeName>
        <fullName evidence="1">Phosphate-transporting ATPase</fullName>
    </alternativeName>
</protein>
<organism>
    <name type="scientific">Staphylococcus aureus (strain MRSA252)</name>
    <dbReference type="NCBI Taxonomy" id="282458"/>
    <lineage>
        <taxon>Bacteria</taxon>
        <taxon>Bacillati</taxon>
        <taxon>Bacillota</taxon>
        <taxon>Bacilli</taxon>
        <taxon>Bacillales</taxon>
        <taxon>Staphylococcaceae</taxon>
        <taxon>Staphylococcus</taxon>
    </lineage>
</organism>
<comment type="function">
    <text evidence="1">Part of the ABC transporter complex PstSACB involved in phosphate import. Responsible for energy coupling to the transport system.</text>
</comment>
<comment type="catalytic activity">
    <reaction evidence="1">
        <text>phosphate(out) + ATP + H2O = ADP + 2 phosphate(in) + H(+)</text>
        <dbReference type="Rhea" id="RHEA:24440"/>
        <dbReference type="ChEBI" id="CHEBI:15377"/>
        <dbReference type="ChEBI" id="CHEBI:15378"/>
        <dbReference type="ChEBI" id="CHEBI:30616"/>
        <dbReference type="ChEBI" id="CHEBI:43474"/>
        <dbReference type="ChEBI" id="CHEBI:456216"/>
        <dbReference type="EC" id="7.3.2.1"/>
    </reaction>
</comment>
<comment type="subunit">
    <text evidence="1">The complex is composed of two ATP-binding proteins (PstB), two transmembrane proteins (PstC and PstA) and a solute-binding protein (PstS).</text>
</comment>
<comment type="subcellular location">
    <subcellularLocation>
        <location evidence="1">Cell membrane</location>
        <topology evidence="1">Peripheral membrane protein</topology>
    </subcellularLocation>
</comment>
<comment type="similarity">
    <text evidence="1">Belongs to the ABC transporter superfamily. Phosphate importer (TC 3.A.1.7) family.</text>
</comment>
<feature type="chain" id="PRO_0000092880" description="Phosphate import ATP-binding protein PstB">
    <location>
        <begin position="1"/>
        <end position="283"/>
    </location>
</feature>
<feature type="domain" description="ABC transporter" evidence="1">
    <location>
        <begin position="37"/>
        <end position="278"/>
    </location>
</feature>
<feature type="region of interest" description="Disordered" evidence="2">
    <location>
        <begin position="1"/>
        <end position="32"/>
    </location>
</feature>
<feature type="compositionally biased region" description="Polar residues" evidence="2">
    <location>
        <begin position="1"/>
        <end position="20"/>
    </location>
</feature>
<feature type="binding site" evidence="1">
    <location>
        <begin position="69"/>
        <end position="76"/>
    </location>
    <ligand>
        <name>ATP</name>
        <dbReference type="ChEBI" id="CHEBI:30616"/>
    </ligand>
</feature>
<name>PSTB_STAAR</name>
<proteinExistence type="inferred from homology"/>
<sequence>MAQTLAQTKQISQSHTFDVSQSHHKTPDDTNSHSVIYSTQNLDLWYGENHALQNINLDIYENQITAIIGPSGCGKSTYIKTLNRMVELVPTVKTAGKILYRDQDIFDQKYSKEQLRTNVGMVFQQPNPFPKSIYDNITYGPKIHGIKNKKVLDEIVEKSLRGAAIWDELKDRLHTNAYSLSGGQQQRVCIARCLAIEPEVILMDEPTSALDPISTLRVEELVQELKEKYTIIMVTHNMQQAARVSDKTAFFLNGYVNEYDDTDKIFSNPSNKKTEDYISGRFG</sequence>
<gene>
    <name evidence="1" type="primary">pstB</name>
    <name type="ordered locus">SAR1399</name>
</gene>
<reference key="1">
    <citation type="journal article" date="2004" name="Proc. Natl. Acad. Sci. U.S.A.">
        <title>Complete genomes of two clinical Staphylococcus aureus strains: evidence for the rapid evolution of virulence and drug resistance.</title>
        <authorList>
            <person name="Holden M.T.G."/>
            <person name="Feil E.J."/>
            <person name="Lindsay J.A."/>
            <person name="Peacock S.J."/>
            <person name="Day N.P.J."/>
            <person name="Enright M.C."/>
            <person name="Foster T.J."/>
            <person name="Moore C.E."/>
            <person name="Hurst L."/>
            <person name="Atkin R."/>
            <person name="Barron A."/>
            <person name="Bason N."/>
            <person name="Bentley S.D."/>
            <person name="Chillingworth C."/>
            <person name="Chillingworth T."/>
            <person name="Churcher C."/>
            <person name="Clark L."/>
            <person name="Corton C."/>
            <person name="Cronin A."/>
            <person name="Doggett J."/>
            <person name="Dowd L."/>
            <person name="Feltwell T."/>
            <person name="Hance Z."/>
            <person name="Harris B."/>
            <person name="Hauser H."/>
            <person name="Holroyd S."/>
            <person name="Jagels K."/>
            <person name="James K.D."/>
            <person name="Lennard N."/>
            <person name="Line A."/>
            <person name="Mayes R."/>
            <person name="Moule S."/>
            <person name="Mungall K."/>
            <person name="Ormond D."/>
            <person name="Quail M.A."/>
            <person name="Rabbinowitsch E."/>
            <person name="Rutherford K.M."/>
            <person name="Sanders M."/>
            <person name="Sharp S."/>
            <person name="Simmonds M."/>
            <person name="Stevens K."/>
            <person name="Whitehead S."/>
            <person name="Barrell B.G."/>
            <person name="Spratt B.G."/>
            <person name="Parkhill J."/>
        </authorList>
    </citation>
    <scope>NUCLEOTIDE SEQUENCE [LARGE SCALE GENOMIC DNA]</scope>
    <source>
        <strain>MRSA252</strain>
    </source>
</reference>
<dbReference type="EC" id="7.3.2.1" evidence="1"/>
<dbReference type="EMBL" id="BX571856">
    <property type="protein sequence ID" value="CAG40396.1"/>
    <property type="molecule type" value="Genomic_DNA"/>
</dbReference>
<dbReference type="RefSeq" id="WP_000079448.1">
    <property type="nucleotide sequence ID" value="NC_002952.2"/>
</dbReference>
<dbReference type="SMR" id="Q6GH21"/>
<dbReference type="KEGG" id="sar:SAR1399"/>
<dbReference type="HOGENOM" id="CLU_000604_1_22_9"/>
<dbReference type="Proteomes" id="UP000000596">
    <property type="component" value="Chromosome"/>
</dbReference>
<dbReference type="GO" id="GO:0005886">
    <property type="term" value="C:plasma membrane"/>
    <property type="evidence" value="ECO:0007669"/>
    <property type="project" value="UniProtKB-SubCell"/>
</dbReference>
<dbReference type="GO" id="GO:0005524">
    <property type="term" value="F:ATP binding"/>
    <property type="evidence" value="ECO:0007669"/>
    <property type="project" value="UniProtKB-KW"/>
</dbReference>
<dbReference type="GO" id="GO:0016887">
    <property type="term" value="F:ATP hydrolysis activity"/>
    <property type="evidence" value="ECO:0007669"/>
    <property type="project" value="InterPro"/>
</dbReference>
<dbReference type="GO" id="GO:0015415">
    <property type="term" value="F:ATPase-coupled phosphate ion transmembrane transporter activity"/>
    <property type="evidence" value="ECO:0007669"/>
    <property type="project" value="UniProtKB-EC"/>
</dbReference>
<dbReference type="GO" id="GO:0035435">
    <property type="term" value="P:phosphate ion transmembrane transport"/>
    <property type="evidence" value="ECO:0007669"/>
    <property type="project" value="InterPro"/>
</dbReference>
<dbReference type="CDD" id="cd03260">
    <property type="entry name" value="ABC_PstB_phosphate_transporter"/>
    <property type="match status" value="1"/>
</dbReference>
<dbReference type="Gene3D" id="3.40.50.300">
    <property type="entry name" value="P-loop containing nucleotide triphosphate hydrolases"/>
    <property type="match status" value="1"/>
</dbReference>
<dbReference type="InterPro" id="IPR003593">
    <property type="entry name" value="AAA+_ATPase"/>
</dbReference>
<dbReference type="InterPro" id="IPR003439">
    <property type="entry name" value="ABC_transporter-like_ATP-bd"/>
</dbReference>
<dbReference type="InterPro" id="IPR017871">
    <property type="entry name" value="ABC_transporter-like_CS"/>
</dbReference>
<dbReference type="InterPro" id="IPR027417">
    <property type="entry name" value="P-loop_NTPase"/>
</dbReference>
<dbReference type="InterPro" id="IPR005670">
    <property type="entry name" value="PstB-like"/>
</dbReference>
<dbReference type="NCBIfam" id="TIGR00972">
    <property type="entry name" value="3a0107s01c2"/>
    <property type="match status" value="1"/>
</dbReference>
<dbReference type="PANTHER" id="PTHR43423">
    <property type="entry name" value="ABC TRANSPORTER I FAMILY MEMBER 17"/>
    <property type="match status" value="1"/>
</dbReference>
<dbReference type="PANTHER" id="PTHR43423:SF1">
    <property type="entry name" value="ABC TRANSPORTER I FAMILY MEMBER 17"/>
    <property type="match status" value="1"/>
</dbReference>
<dbReference type="Pfam" id="PF00005">
    <property type="entry name" value="ABC_tran"/>
    <property type="match status" value="1"/>
</dbReference>
<dbReference type="SMART" id="SM00382">
    <property type="entry name" value="AAA"/>
    <property type="match status" value="1"/>
</dbReference>
<dbReference type="SUPFAM" id="SSF52540">
    <property type="entry name" value="P-loop containing nucleoside triphosphate hydrolases"/>
    <property type="match status" value="1"/>
</dbReference>
<dbReference type="PROSITE" id="PS00211">
    <property type="entry name" value="ABC_TRANSPORTER_1"/>
    <property type="match status" value="1"/>
</dbReference>
<dbReference type="PROSITE" id="PS50893">
    <property type="entry name" value="ABC_TRANSPORTER_2"/>
    <property type="match status" value="1"/>
</dbReference>
<dbReference type="PROSITE" id="PS51238">
    <property type="entry name" value="PSTB"/>
    <property type="match status" value="1"/>
</dbReference>